<organism>
    <name type="scientific">Pyricularia oryzae (strain 70-15 / ATCC MYA-4617 / FGSC 8958)</name>
    <name type="common">Rice blast fungus</name>
    <name type="synonym">Magnaporthe oryzae</name>
    <dbReference type="NCBI Taxonomy" id="242507"/>
    <lineage>
        <taxon>Eukaryota</taxon>
        <taxon>Fungi</taxon>
        <taxon>Dikarya</taxon>
        <taxon>Ascomycota</taxon>
        <taxon>Pezizomycotina</taxon>
        <taxon>Sordariomycetes</taxon>
        <taxon>Sordariomycetidae</taxon>
        <taxon>Magnaporthales</taxon>
        <taxon>Pyriculariaceae</taxon>
        <taxon>Pyricularia</taxon>
    </lineage>
</organism>
<dbReference type="EMBL" id="CM001231">
    <property type="protein sequence ID" value="EHA57066.1"/>
    <property type="molecule type" value="Genomic_DNA"/>
</dbReference>
<dbReference type="RefSeq" id="XP_003709678.1">
    <property type="nucleotide sequence ID" value="XM_003709630.1"/>
</dbReference>
<dbReference type="SMR" id="A4R1G4"/>
<dbReference type="FunCoup" id="A4R1G4">
    <property type="interactions" value="536"/>
</dbReference>
<dbReference type="STRING" id="242507.A4R1G4"/>
<dbReference type="EnsemblFungi" id="MGG_06938T0">
    <property type="protein sequence ID" value="MGG_06938T0"/>
    <property type="gene ID" value="MGG_06938"/>
</dbReference>
<dbReference type="GeneID" id="2685111"/>
<dbReference type="KEGG" id="mgr:MGG_06938"/>
<dbReference type="VEuPathDB" id="FungiDB:MGG_06938"/>
<dbReference type="eggNOG" id="KOG3190">
    <property type="taxonomic scope" value="Eukaryota"/>
</dbReference>
<dbReference type="HOGENOM" id="CLU_048802_0_0_1"/>
<dbReference type="InParanoid" id="A4R1G4"/>
<dbReference type="OMA" id="ERKEMPW"/>
<dbReference type="OrthoDB" id="448446at2759"/>
<dbReference type="Proteomes" id="UP000009058">
    <property type="component" value="Chromosome 1"/>
</dbReference>
<dbReference type="GO" id="GO:0030686">
    <property type="term" value="C:90S preribosome"/>
    <property type="evidence" value="ECO:0007669"/>
    <property type="project" value="TreeGrafter"/>
</dbReference>
<dbReference type="GO" id="GO:0005730">
    <property type="term" value="C:nucleolus"/>
    <property type="evidence" value="ECO:0007669"/>
    <property type="project" value="UniProtKB-SubCell"/>
</dbReference>
<dbReference type="GO" id="GO:0000462">
    <property type="term" value="P:maturation of SSU-rRNA from tricistronic rRNA transcript (SSU-rRNA, 5.8S rRNA, LSU-rRNA)"/>
    <property type="evidence" value="ECO:0007669"/>
    <property type="project" value="TreeGrafter"/>
</dbReference>
<dbReference type="InterPro" id="IPR009292">
    <property type="entry name" value="RRP36"/>
</dbReference>
<dbReference type="PANTHER" id="PTHR21738">
    <property type="entry name" value="RIBOSOMAL RNA PROCESSING PROTEIN 36 HOMOLOG"/>
    <property type="match status" value="1"/>
</dbReference>
<dbReference type="PANTHER" id="PTHR21738:SF0">
    <property type="entry name" value="RIBOSOMAL RNA PROCESSING PROTEIN 36 HOMOLOG"/>
    <property type="match status" value="1"/>
</dbReference>
<dbReference type="Pfam" id="PF06102">
    <property type="entry name" value="RRP36"/>
    <property type="match status" value="1"/>
</dbReference>
<comment type="function">
    <text evidence="1">Component of the 90S pre-ribosome involved in the maturation of rRNAs. Required for early cleavages of the pre-RNAs in the 40S ribosomal subunit maturation pathway (By similarity).</text>
</comment>
<comment type="subunit">
    <text evidence="1">Associates with 90S and pre-40S pre-ribosomal particles.</text>
</comment>
<comment type="subcellular location">
    <subcellularLocation>
        <location evidence="1">Nucleus</location>
        <location evidence="1">Nucleolus</location>
    </subcellularLocation>
</comment>
<comment type="similarity">
    <text evidence="4">Belongs to the RRP36 family.</text>
</comment>
<feature type="chain" id="PRO_0000397638" description="rRNA biogenesis protein RRP36">
    <location>
        <begin position="1"/>
        <end position="316"/>
    </location>
</feature>
<feature type="region of interest" description="Disordered" evidence="3">
    <location>
        <begin position="1"/>
        <end position="177"/>
    </location>
</feature>
<feature type="region of interest" description="Disordered" evidence="3">
    <location>
        <begin position="227"/>
        <end position="260"/>
    </location>
</feature>
<feature type="region of interest" description="Disordered" evidence="3">
    <location>
        <begin position="293"/>
        <end position="316"/>
    </location>
</feature>
<feature type="coiled-coil region" evidence="2">
    <location>
        <begin position="218"/>
        <end position="260"/>
    </location>
</feature>
<feature type="compositionally biased region" description="Basic and acidic residues" evidence="3">
    <location>
        <begin position="10"/>
        <end position="30"/>
    </location>
</feature>
<feature type="compositionally biased region" description="Acidic residues" evidence="3">
    <location>
        <begin position="48"/>
        <end position="76"/>
    </location>
</feature>
<feature type="compositionally biased region" description="Basic residues" evidence="3">
    <location>
        <begin position="88"/>
        <end position="97"/>
    </location>
</feature>
<feature type="compositionally biased region" description="Basic and acidic residues" evidence="3">
    <location>
        <begin position="142"/>
        <end position="160"/>
    </location>
</feature>
<feature type="compositionally biased region" description="Basic and acidic residues" evidence="3">
    <location>
        <begin position="227"/>
        <end position="259"/>
    </location>
</feature>
<feature type="compositionally biased region" description="Basic and acidic residues" evidence="3">
    <location>
        <begin position="301"/>
        <end position="316"/>
    </location>
</feature>
<protein>
    <recommendedName>
        <fullName>rRNA biogenesis protein RRP36</fullName>
    </recommendedName>
    <alternativeName>
        <fullName>Ribosomal RNA-processing protein 36</fullName>
    </alternativeName>
</protein>
<accession>A4R1G4</accession>
<accession>G4MNF2</accession>
<proteinExistence type="inferred from homology"/>
<keyword id="KW-0175">Coiled coil</keyword>
<keyword id="KW-0539">Nucleus</keyword>
<keyword id="KW-1185">Reference proteome</keyword>
<keyword id="KW-0687">Ribonucleoprotein</keyword>
<keyword id="KW-0690">Ribosome biogenesis</keyword>
<keyword id="KW-0698">rRNA processing</keyword>
<reference key="1">
    <citation type="journal article" date="2005" name="Nature">
        <title>The genome sequence of the rice blast fungus Magnaporthe grisea.</title>
        <authorList>
            <person name="Dean R.A."/>
            <person name="Talbot N.J."/>
            <person name="Ebbole D.J."/>
            <person name="Farman M.L."/>
            <person name="Mitchell T.K."/>
            <person name="Orbach M.J."/>
            <person name="Thon M.R."/>
            <person name="Kulkarni R."/>
            <person name="Xu J.-R."/>
            <person name="Pan H."/>
            <person name="Read N.D."/>
            <person name="Lee Y.-H."/>
            <person name="Carbone I."/>
            <person name="Brown D."/>
            <person name="Oh Y.Y."/>
            <person name="Donofrio N."/>
            <person name="Jeong J.S."/>
            <person name="Soanes D.M."/>
            <person name="Djonovic S."/>
            <person name="Kolomiets E."/>
            <person name="Rehmeyer C."/>
            <person name="Li W."/>
            <person name="Harding M."/>
            <person name="Kim S."/>
            <person name="Lebrun M.-H."/>
            <person name="Bohnert H."/>
            <person name="Coughlan S."/>
            <person name="Butler J."/>
            <person name="Calvo S.E."/>
            <person name="Ma L.-J."/>
            <person name="Nicol R."/>
            <person name="Purcell S."/>
            <person name="Nusbaum C."/>
            <person name="Galagan J.E."/>
            <person name="Birren B.W."/>
        </authorList>
    </citation>
    <scope>NUCLEOTIDE SEQUENCE [LARGE SCALE GENOMIC DNA]</scope>
    <source>
        <strain>70-15 / ATCC MYA-4617 / FGSC 8958</strain>
    </source>
</reference>
<evidence type="ECO:0000250" key="1"/>
<evidence type="ECO:0000255" key="2"/>
<evidence type="ECO:0000256" key="3">
    <source>
        <dbReference type="SAM" id="MobiDB-lite"/>
    </source>
</evidence>
<evidence type="ECO:0000305" key="4"/>
<sequence>MELSGRKRKAAFDPERRVKVRRRDVEKADAWEPPSEDEQDARSSSPAEESDQGQEEDDVDEEDEEESGASEPEDDREAQLSFGARLRLSQKRQKPKPKGSTEQDPSDAQEPSWRGREARQGNAKTVSKAAASASAPGRKTKSAPEEMSSKRPVSRYREVVKPPPNARPKPRDVRFEQELTGEDYQRFRRNYAFLDEYRNDEMAKLREIIARKKGVTPADREDAKLKLRKMEDEKRSQDRKDREHELMREHKKKEKELVKQGKKPFFLKKSEQKKLLLMDKYAGMSKGQVDKAIEKKRKKVAGKEKKQLPFARRAME</sequence>
<name>RRP36_PYRO7</name>
<gene>
    <name type="primary">RRP36</name>
    <name type="ORF">MGG_06938</name>
</gene>